<feature type="chain" id="PRO_0000104100" description="Uncharacterized protein Mb2939c">
    <location>
        <begin position="1"/>
        <end position="370"/>
    </location>
</feature>
<evidence type="ECO:0000305" key="1"/>
<sequence>MKRVDTIRPRSRAVRLHVRGLGLPDETAIQLWIVDGRISTEPVAGADTVFDGGWILPGLVDAHCHVGLGKHGNVELDEAIAQAETERDVGALLLRDCGSPTDTRGLDDHEDLPRIIRAGRHLARPKRYIAGFAVELEDESQLPAAVAEQARRGDGWVKLVGDWIDRQIGDLAPLWSDDVLKAAIDTAHAQGARVTAHVFSEDALPGLINAGIDCIEHGTGLTDDTIALMLEHGTALVPTLINLENFPGIADAAGRYPTYAAHMRDLYARGYGRVAAAREAGVPVYAGTDAGSTIEHGRIADEVAALQRIGMTAHEALGAACWDARRWLGRPGLDDRASADLLCYAQDPRQGPGVLQHPDLVILRGRTFGP</sequence>
<gene>
    <name type="ordered locus">BQ2027_MB2939C</name>
</gene>
<dbReference type="EMBL" id="LT708304">
    <property type="protein sequence ID" value="SIU01560.1"/>
    <property type="molecule type" value="Genomic_DNA"/>
</dbReference>
<dbReference type="RefSeq" id="NP_856584.1">
    <property type="nucleotide sequence ID" value="NC_002945.3"/>
</dbReference>
<dbReference type="RefSeq" id="WP_003899537.1">
    <property type="nucleotide sequence ID" value="NC_002945.4"/>
</dbReference>
<dbReference type="SMR" id="P68916"/>
<dbReference type="KEGG" id="mbo:BQ2027_MB2939C"/>
<dbReference type="PATRIC" id="fig|233413.5.peg.3225"/>
<dbReference type="Proteomes" id="UP000001419">
    <property type="component" value="Chromosome"/>
</dbReference>
<dbReference type="GO" id="GO:0016810">
    <property type="term" value="F:hydrolase activity, acting on carbon-nitrogen (but not peptide) bonds"/>
    <property type="evidence" value="ECO:0007669"/>
    <property type="project" value="InterPro"/>
</dbReference>
<dbReference type="CDD" id="cd01299">
    <property type="entry name" value="Met_dep_hydrolase_A"/>
    <property type="match status" value="1"/>
</dbReference>
<dbReference type="FunFam" id="3.20.20.140:FF:000054">
    <property type="entry name" value="Imidazolonepropionase-like amidohydrolase"/>
    <property type="match status" value="1"/>
</dbReference>
<dbReference type="Gene3D" id="3.20.20.140">
    <property type="entry name" value="Metal-dependent hydrolases"/>
    <property type="match status" value="1"/>
</dbReference>
<dbReference type="Gene3D" id="2.30.40.10">
    <property type="entry name" value="Urease, subunit C, domain 1"/>
    <property type="match status" value="1"/>
</dbReference>
<dbReference type="InterPro" id="IPR006680">
    <property type="entry name" value="Amidohydro-rel"/>
</dbReference>
<dbReference type="InterPro" id="IPR011059">
    <property type="entry name" value="Metal-dep_hydrolase_composite"/>
</dbReference>
<dbReference type="InterPro" id="IPR032466">
    <property type="entry name" value="Metal_Hydrolase"/>
</dbReference>
<dbReference type="InterPro" id="IPR051781">
    <property type="entry name" value="Metallo-dep_Hydrolase"/>
</dbReference>
<dbReference type="PANTHER" id="PTHR43135">
    <property type="entry name" value="ALPHA-D-RIBOSE 1-METHYLPHOSPHONATE 5-TRIPHOSPHATE DIPHOSPHATASE"/>
    <property type="match status" value="1"/>
</dbReference>
<dbReference type="PANTHER" id="PTHR43135:SF4">
    <property type="entry name" value="AMIDOHYDROLASE-RELATED DOMAIN-CONTAINING PROTEIN"/>
    <property type="match status" value="1"/>
</dbReference>
<dbReference type="Pfam" id="PF01979">
    <property type="entry name" value="Amidohydro_1"/>
    <property type="match status" value="1"/>
</dbReference>
<dbReference type="SUPFAM" id="SSF51556">
    <property type="entry name" value="Metallo-dependent hydrolases"/>
    <property type="match status" value="1"/>
</dbReference>
<name>Y2939_MYCBO</name>
<proteinExistence type="inferred from homology"/>
<organism>
    <name type="scientific">Mycobacterium bovis (strain ATCC BAA-935 / AF2122/97)</name>
    <dbReference type="NCBI Taxonomy" id="233413"/>
    <lineage>
        <taxon>Bacteria</taxon>
        <taxon>Bacillati</taxon>
        <taxon>Actinomycetota</taxon>
        <taxon>Actinomycetes</taxon>
        <taxon>Mycobacteriales</taxon>
        <taxon>Mycobacteriaceae</taxon>
        <taxon>Mycobacterium</taxon>
        <taxon>Mycobacterium tuberculosis complex</taxon>
    </lineage>
</organism>
<protein>
    <recommendedName>
        <fullName>Uncharacterized protein Mb2939c</fullName>
    </recommendedName>
</protein>
<accession>P68916</accession>
<accession>A0A1R3Y2K4</accession>
<accession>Q10965</accession>
<accession>X2BMS4</accession>
<reference key="1">
    <citation type="journal article" date="2003" name="Proc. Natl. Acad. Sci. U.S.A.">
        <title>The complete genome sequence of Mycobacterium bovis.</title>
        <authorList>
            <person name="Garnier T."/>
            <person name="Eiglmeier K."/>
            <person name="Camus J.-C."/>
            <person name="Medina N."/>
            <person name="Mansoor H."/>
            <person name="Pryor M."/>
            <person name="Duthoy S."/>
            <person name="Grondin S."/>
            <person name="Lacroix C."/>
            <person name="Monsempe C."/>
            <person name="Simon S."/>
            <person name="Harris B."/>
            <person name="Atkin R."/>
            <person name="Doggett J."/>
            <person name="Mayes R."/>
            <person name="Keating L."/>
            <person name="Wheeler P.R."/>
            <person name="Parkhill J."/>
            <person name="Barrell B.G."/>
            <person name="Cole S.T."/>
            <person name="Gordon S.V."/>
            <person name="Hewinson R.G."/>
        </authorList>
    </citation>
    <scope>NUCLEOTIDE SEQUENCE [LARGE SCALE GENOMIC DNA]</scope>
    <source>
        <strain>ATCC BAA-935 / AF2122/97</strain>
    </source>
</reference>
<reference key="2">
    <citation type="journal article" date="2017" name="Genome Announc.">
        <title>Updated reference genome sequence and annotation of Mycobacterium bovis AF2122/97.</title>
        <authorList>
            <person name="Malone K.M."/>
            <person name="Farrell D."/>
            <person name="Stuber T.P."/>
            <person name="Schubert O.T."/>
            <person name="Aebersold R."/>
            <person name="Robbe-Austerman S."/>
            <person name="Gordon S.V."/>
        </authorList>
    </citation>
    <scope>NUCLEOTIDE SEQUENCE [LARGE SCALE GENOMIC DNA]</scope>
    <scope>GENOME REANNOTATION</scope>
    <source>
        <strain>ATCC BAA-935 / AF2122/97</strain>
    </source>
</reference>
<comment type="similarity">
    <text evidence="1">Belongs to the metallo-dependent hydrolases superfamily.</text>
</comment>
<keyword id="KW-1185">Reference proteome</keyword>